<feature type="chain" id="PRO_1000061952" description="Uronate isomerase">
    <location>
        <begin position="1"/>
        <end position="470"/>
    </location>
</feature>
<accession>A8GJX5</accession>
<gene>
    <name evidence="1" type="primary">uxaC</name>
    <name type="ordered locus">Spro_4321</name>
</gene>
<dbReference type="EC" id="5.3.1.12" evidence="1"/>
<dbReference type="EMBL" id="CP000826">
    <property type="protein sequence ID" value="ABV43415.1"/>
    <property type="molecule type" value="Genomic_DNA"/>
</dbReference>
<dbReference type="SMR" id="A8GJX5"/>
<dbReference type="STRING" id="399741.Spro_4321"/>
<dbReference type="KEGG" id="spe:Spro_4321"/>
<dbReference type="eggNOG" id="COG1904">
    <property type="taxonomic scope" value="Bacteria"/>
</dbReference>
<dbReference type="HOGENOM" id="CLU_044465_1_0_6"/>
<dbReference type="OrthoDB" id="9766564at2"/>
<dbReference type="UniPathway" id="UPA00246"/>
<dbReference type="GO" id="GO:0008880">
    <property type="term" value="F:glucuronate isomerase activity"/>
    <property type="evidence" value="ECO:0007669"/>
    <property type="project" value="UniProtKB-UniRule"/>
</dbReference>
<dbReference type="GO" id="GO:0019698">
    <property type="term" value="P:D-galacturonate catabolic process"/>
    <property type="evidence" value="ECO:0007669"/>
    <property type="project" value="TreeGrafter"/>
</dbReference>
<dbReference type="GO" id="GO:0042840">
    <property type="term" value="P:D-glucuronate catabolic process"/>
    <property type="evidence" value="ECO:0007669"/>
    <property type="project" value="TreeGrafter"/>
</dbReference>
<dbReference type="Gene3D" id="3.20.20.140">
    <property type="entry name" value="Metal-dependent hydrolases"/>
    <property type="match status" value="1"/>
</dbReference>
<dbReference type="Gene3D" id="1.10.2020.10">
    <property type="entry name" value="uronate isomerase, domain 2, chain A"/>
    <property type="match status" value="1"/>
</dbReference>
<dbReference type="HAMAP" id="MF_00675">
    <property type="entry name" value="UxaC"/>
    <property type="match status" value="1"/>
</dbReference>
<dbReference type="InterPro" id="IPR032466">
    <property type="entry name" value="Metal_Hydrolase"/>
</dbReference>
<dbReference type="InterPro" id="IPR003766">
    <property type="entry name" value="Uronate_isomerase"/>
</dbReference>
<dbReference type="NCBIfam" id="NF002794">
    <property type="entry name" value="PRK02925.1"/>
    <property type="match status" value="1"/>
</dbReference>
<dbReference type="PANTHER" id="PTHR30068">
    <property type="entry name" value="URONATE ISOMERASE"/>
    <property type="match status" value="1"/>
</dbReference>
<dbReference type="PANTHER" id="PTHR30068:SF4">
    <property type="entry name" value="URONATE ISOMERASE"/>
    <property type="match status" value="1"/>
</dbReference>
<dbReference type="Pfam" id="PF02614">
    <property type="entry name" value="UxaC"/>
    <property type="match status" value="1"/>
</dbReference>
<dbReference type="SUPFAM" id="SSF51556">
    <property type="entry name" value="Metallo-dependent hydrolases"/>
    <property type="match status" value="1"/>
</dbReference>
<reference key="1">
    <citation type="submission" date="2007-09" db="EMBL/GenBank/DDBJ databases">
        <title>Complete sequence of chromosome of Serratia proteamaculans 568.</title>
        <authorList>
            <consortium name="US DOE Joint Genome Institute"/>
            <person name="Copeland A."/>
            <person name="Lucas S."/>
            <person name="Lapidus A."/>
            <person name="Barry K."/>
            <person name="Glavina del Rio T."/>
            <person name="Dalin E."/>
            <person name="Tice H."/>
            <person name="Pitluck S."/>
            <person name="Chain P."/>
            <person name="Malfatti S."/>
            <person name="Shin M."/>
            <person name="Vergez L."/>
            <person name="Schmutz J."/>
            <person name="Larimer F."/>
            <person name="Land M."/>
            <person name="Hauser L."/>
            <person name="Kyrpides N."/>
            <person name="Kim E."/>
            <person name="Taghavi S."/>
            <person name="Newman L."/>
            <person name="Vangronsveld J."/>
            <person name="van der Lelie D."/>
            <person name="Richardson P."/>
        </authorList>
    </citation>
    <scope>NUCLEOTIDE SEQUENCE [LARGE SCALE GENOMIC DNA]</scope>
    <source>
        <strain>568</strain>
    </source>
</reference>
<sequence length="470" mass="53062">MATFLSEDFLLGNEFARRLYHDYAADQPIFDYHCHLPPEQIAENTRFKNLYEIWLKGDHYKWRAMRTNGVAERLCTGDAGDREKFDAWAATVPHTIGNPLYHWTHLELRRPFGITGTLLSPTTADDIWQRGNALLAQDDFRARGIMQQMNVKMVGTTDDPIDDLRHHKAIAADSSFDIKVLPSWRPDKAFNIDAPGFNDYLQKLEAAADINIGRFSALCDALKKRMDHFAAHGCKVADHALDVVVYGEADESTLDAILTARLSGKLPTPEQSAQFKSAVLLFLAAEYQRREWVQQYHIGALRNNNSRMLASVGPDIGFDSINDRPLAEALSRLLDAQARQGGLPKTILYCLNPRDNEVIGTMVGNFQGEGTPGKMQFGSGWWFNDQKDGMQRQMTQLAQLGLLSRFVGMLTDSRSFLSYTRHEYFRRILCQMIGGWVENGEAPADITLLGEMVKNICFDNAKNYFAIELA</sequence>
<keyword id="KW-0413">Isomerase</keyword>
<protein>
    <recommendedName>
        <fullName evidence="1">Uronate isomerase</fullName>
        <ecNumber evidence="1">5.3.1.12</ecNumber>
    </recommendedName>
    <alternativeName>
        <fullName evidence="1">Glucuronate isomerase</fullName>
    </alternativeName>
    <alternativeName>
        <fullName evidence="1">Uronic isomerase</fullName>
    </alternativeName>
</protein>
<evidence type="ECO:0000255" key="1">
    <source>
        <dbReference type="HAMAP-Rule" id="MF_00675"/>
    </source>
</evidence>
<proteinExistence type="inferred from homology"/>
<comment type="catalytic activity">
    <reaction evidence="1">
        <text>D-glucuronate = D-fructuronate</text>
        <dbReference type="Rhea" id="RHEA:13049"/>
        <dbReference type="ChEBI" id="CHEBI:58720"/>
        <dbReference type="ChEBI" id="CHEBI:59863"/>
        <dbReference type="EC" id="5.3.1.12"/>
    </reaction>
</comment>
<comment type="catalytic activity">
    <reaction evidence="1">
        <text>aldehydo-D-galacturonate = keto-D-tagaturonate</text>
        <dbReference type="Rhea" id="RHEA:27702"/>
        <dbReference type="ChEBI" id="CHEBI:12952"/>
        <dbReference type="ChEBI" id="CHEBI:17886"/>
        <dbReference type="EC" id="5.3.1.12"/>
    </reaction>
</comment>
<comment type="pathway">
    <text evidence="1">Carbohydrate metabolism; pentose and glucuronate interconversion.</text>
</comment>
<comment type="similarity">
    <text evidence="1">Belongs to the metallo-dependent hydrolases superfamily. Uronate isomerase family.</text>
</comment>
<name>UXAC_SERP5</name>
<organism>
    <name type="scientific">Serratia proteamaculans (strain 568)</name>
    <dbReference type="NCBI Taxonomy" id="399741"/>
    <lineage>
        <taxon>Bacteria</taxon>
        <taxon>Pseudomonadati</taxon>
        <taxon>Pseudomonadota</taxon>
        <taxon>Gammaproteobacteria</taxon>
        <taxon>Enterobacterales</taxon>
        <taxon>Yersiniaceae</taxon>
        <taxon>Serratia</taxon>
    </lineage>
</organism>